<feature type="chain" id="PRO_1000119469" description="RNA pyrophosphohydrolase">
    <location>
        <begin position="1"/>
        <end position="161"/>
    </location>
</feature>
<feature type="domain" description="Nudix hydrolase" evidence="1">
    <location>
        <begin position="6"/>
        <end position="149"/>
    </location>
</feature>
<feature type="short sequence motif" description="Nudix box">
    <location>
        <begin position="38"/>
        <end position="59"/>
    </location>
</feature>
<accession>B7I4D7</accession>
<gene>
    <name evidence="1" type="primary">rppH</name>
    <name evidence="1" type="synonym">nudH</name>
    <name type="ordered locus">AB57_0490</name>
</gene>
<reference key="1">
    <citation type="journal article" date="2008" name="J. Bacteriol.">
        <title>Comparative genome sequence analysis of multidrug-resistant Acinetobacter baumannii.</title>
        <authorList>
            <person name="Adams M.D."/>
            <person name="Goglin K."/>
            <person name="Molyneaux N."/>
            <person name="Hujer K.M."/>
            <person name="Lavender H."/>
            <person name="Jamison J.J."/>
            <person name="MacDonald I.J."/>
            <person name="Martin K.M."/>
            <person name="Russo T."/>
            <person name="Campagnari A.A."/>
            <person name="Hujer A.M."/>
            <person name="Bonomo R.A."/>
            <person name="Gill S.R."/>
        </authorList>
    </citation>
    <scope>NUCLEOTIDE SEQUENCE [LARGE SCALE GENOMIC DNA]</scope>
    <source>
        <strain>AB0057</strain>
    </source>
</reference>
<comment type="function">
    <text evidence="1">Accelerates the degradation of transcripts by removing pyrophosphate from the 5'-end of triphosphorylated RNA, leading to a more labile monophosphorylated state that can stimulate subsequent ribonuclease cleavage.</text>
</comment>
<comment type="cofactor">
    <cofactor evidence="1">
        <name>a divalent metal cation</name>
        <dbReference type="ChEBI" id="CHEBI:60240"/>
    </cofactor>
</comment>
<comment type="similarity">
    <text evidence="1">Belongs to the Nudix hydrolase family. RppH subfamily.</text>
</comment>
<organism>
    <name type="scientific">Acinetobacter baumannii (strain AB0057)</name>
    <dbReference type="NCBI Taxonomy" id="480119"/>
    <lineage>
        <taxon>Bacteria</taxon>
        <taxon>Pseudomonadati</taxon>
        <taxon>Pseudomonadota</taxon>
        <taxon>Gammaproteobacteria</taxon>
        <taxon>Moraxellales</taxon>
        <taxon>Moraxellaceae</taxon>
        <taxon>Acinetobacter</taxon>
        <taxon>Acinetobacter calcoaceticus/baumannii complex</taxon>
    </lineage>
</organism>
<name>RPPH_ACIB5</name>
<sequence>MIDSEGFRPNVGIILANDDGQVLWAKRIGHNAWQFPQGGIQFGETPEQALFRELREEIGLLPEHVQIIAQTKGWLRYRLPHRYIRSDSDPVCIGQKQKWFLLKLTAPAKNIQLNLADPPEFDEWQWVSYWYPLGQVVNFKRDVYRKAMVELCTQLPVQQLP</sequence>
<proteinExistence type="inferred from homology"/>
<evidence type="ECO:0000255" key="1">
    <source>
        <dbReference type="HAMAP-Rule" id="MF_00298"/>
    </source>
</evidence>
<protein>
    <recommendedName>
        <fullName evidence="1">RNA pyrophosphohydrolase</fullName>
        <ecNumber evidence="1">3.6.1.-</ecNumber>
    </recommendedName>
    <alternativeName>
        <fullName evidence="1">(Di)nucleoside polyphosphate hydrolase</fullName>
    </alternativeName>
</protein>
<keyword id="KW-0378">Hydrolase</keyword>
<dbReference type="EC" id="3.6.1.-" evidence="1"/>
<dbReference type="EMBL" id="CP001182">
    <property type="protein sequence ID" value="ACJ39912.1"/>
    <property type="molecule type" value="Genomic_DNA"/>
</dbReference>
<dbReference type="RefSeq" id="WP_000567254.1">
    <property type="nucleotide sequence ID" value="NC_011586.2"/>
</dbReference>
<dbReference type="SMR" id="B7I4D7"/>
<dbReference type="KEGG" id="abn:AB57_0490"/>
<dbReference type="HOGENOM" id="CLU_087195_3_1_6"/>
<dbReference type="Proteomes" id="UP000007094">
    <property type="component" value="Chromosome"/>
</dbReference>
<dbReference type="GO" id="GO:0016462">
    <property type="term" value="F:pyrophosphatase activity"/>
    <property type="evidence" value="ECO:0007669"/>
    <property type="project" value="UniProtKB-ARBA"/>
</dbReference>
<dbReference type="CDD" id="cd03671">
    <property type="entry name" value="NUDIX_Ap4A_hydrolase_plant_like"/>
    <property type="match status" value="1"/>
</dbReference>
<dbReference type="FunFam" id="3.90.79.10:FF:000001">
    <property type="entry name" value="RNA pyrophosphohydrolase"/>
    <property type="match status" value="1"/>
</dbReference>
<dbReference type="Gene3D" id="3.90.79.10">
    <property type="entry name" value="Nucleoside Triphosphate Pyrophosphohydrolase"/>
    <property type="match status" value="1"/>
</dbReference>
<dbReference type="HAMAP" id="MF_00298">
    <property type="entry name" value="Nudix_RppH"/>
    <property type="match status" value="1"/>
</dbReference>
<dbReference type="InterPro" id="IPR020476">
    <property type="entry name" value="Nudix_hydrolase"/>
</dbReference>
<dbReference type="InterPro" id="IPR015797">
    <property type="entry name" value="NUDIX_hydrolase-like_dom_sf"/>
</dbReference>
<dbReference type="InterPro" id="IPR020084">
    <property type="entry name" value="NUDIX_hydrolase_CS"/>
</dbReference>
<dbReference type="InterPro" id="IPR000086">
    <property type="entry name" value="NUDIX_hydrolase_dom"/>
</dbReference>
<dbReference type="InterPro" id="IPR022927">
    <property type="entry name" value="RppH"/>
</dbReference>
<dbReference type="NCBIfam" id="NF001934">
    <property type="entry name" value="PRK00714.1-1"/>
    <property type="match status" value="1"/>
</dbReference>
<dbReference type="NCBIfam" id="NF001937">
    <property type="entry name" value="PRK00714.1-4"/>
    <property type="match status" value="1"/>
</dbReference>
<dbReference type="NCBIfam" id="NF001938">
    <property type="entry name" value="PRK00714.1-5"/>
    <property type="match status" value="1"/>
</dbReference>
<dbReference type="PANTHER" id="PTHR43736">
    <property type="entry name" value="ADP-RIBOSE PYROPHOSPHATASE"/>
    <property type="match status" value="1"/>
</dbReference>
<dbReference type="PANTHER" id="PTHR43736:SF1">
    <property type="entry name" value="DIHYDRONEOPTERIN TRIPHOSPHATE DIPHOSPHATASE"/>
    <property type="match status" value="1"/>
</dbReference>
<dbReference type="Pfam" id="PF00293">
    <property type="entry name" value="NUDIX"/>
    <property type="match status" value="1"/>
</dbReference>
<dbReference type="PRINTS" id="PR00502">
    <property type="entry name" value="NUDIXFAMILY"/>
</dbReference>
<dbReference type="SUPFAM" id="SSF55811">
    <property type="entry name" value="Nudix"/>
    <property type="match status" value="1"/>
</dbReference>
<dbReference type="PROSITE" id="PS51462">
    <property type="entry name" value="NUDIX"/>
    <property type="match status" value="1"/>
</dbReference>
<dbReference type="PROSITE" id="PS00893">
    <property type="entry name" value="NUDIX_BOX"/>
    <property type="match status" value="1"/>
</dbReference>